<keyword id="KW-0028">Amino-acid biosynthesis</keyword>
<keyword id="KW-0100">Branched-chain amino acid biosynthesis</keyword>
<keyword id="KW-0432">Leucine biosynthesis</keyword>
<keyword id="KW-1185">Reference proteome</keyword>
<keyword id="KW-0808">Transferase</keyword>
<protein>
    <recommendedName>
        <fullName evidence="1">Isopropyl malate synthase gloH</fullName>
        <ecNumber evidence="1">2.3.3.13</ecNumber>
    </recommendedName>
    <alternativeName>
        <fullName evidence="8">L-homotyrosine biosynthesis sub-cluster protein gloH</fullName>
    </alternativeName>
    <alternativeName>
        <fullName evidence="9">Pneumocandin biosynthesis cluster protein H</fullName>
    </alternativeName>
</protein>
<accession>S3D9F8</accession>
<sequence>MKNTDERYSMATCCAGGQSLRSKYGERAPNIQLSDRQWPSKKLTKSPIWLSTDLRDGNQALPNPMTLQQKWRMFQLLVSIGFTQIEVSFPCASQTEFDFTRQLIETPGATPDDVTLEVLSPCREDAIATSVRSLKGAKQAILFLYLATSDNYRETVLQLSEAEWLDQAKRCVEYARSITKDDPENCRTKWSFGFGFEDFANARPEAALRLGETIKTAWGPSKDNPVILGLATSVEATTPNVFADQVEYFSRNITEREKVCISIHTHNDRGGAVASAELACLAGGDRVEGCLFGNGERAGNLDLITCSMNMFTQGIETGLDFSDLLEIRRVYEEVTNLPVHPRQPYSGDFYFRAFAGAHQDAIRKGLAKRGRLAAMPSGLTQMSKGMIINGTSNEKIPSSTWRVPYLPLDPADLGFSFDSVIGVNSQSGKGGIAWLIQQGLGFNIPNELAAHYSQIIKKRSVSLERGLAAEEICDFFLEIYDLKSSYNTQLLKRLHSGFSQTIDMQQELEDATAPANNAAMDISKTMGIDVHCTMASSHVISSHDGEQLSNVAFVQCEIEQTTPCVWGVGVALSREEAVNRSLLLAARRKPGTETPDTKTSVNAIIQPLEVYSFSQKA</sequence>
<evidence type="ECO:0000250" key="1">
    <source>
        <dbReference type="UniProtKB" id="K0E4E5"/>
    </source>
</evidence>
<evidence type="ECO:0000255" key="2">
    <source>
        <dbReference type="PROSITE-ProRule" id="PRU01151"/>
    </source>
</evidence>
<evidence type="ECO:0000269" key="3">
    <source>
    </source>
</evidence>
<evidence type="ECO:0000269" key="4">
    <source>
    </source>
</evidence>
<evidence type="ECO:0000269" key="5">
    <source>
    </source>
</evidence>
<evidence type="ECO:0000269" key="6">
    <source>
    </source>
</evidence>
<evidence type="ECO:0000269" key="7">
    <source>
    </source>
</evidence>
<evidence type="ECO:0000303" key="8">
    <source>
    </source>
</evidence>
<evidence type="ECO:0000303" key="9">
    <source>
    </source>
</evidence>
<evidence type="ECO:0000303" key="10">
    <source>
    </source>
</evidence>
<evidence type="ECO:0000303" key="11">
    <source>
    </source>
</evidence>
<evidence type="ECO:0000305" key="12"/>
<evidence type="ECO:0000305" key="13">
    <source>
    </source>
</evidence>
<reference key="1">
    <citation type="journal article" date="2013" name="BMC Genomics">
        <title>Genomics-driven discovery of the pneumocandin biosynthetic gene cluster in the fungus Glarea lozoyensis.</title>
        <authorList>
            <person name="Chen L."/>
            <person name="Yue Q."/>
            <person name="Zhang X."/>
            <person name="Xiang M."/>
            <person name="Wang C."/>
            <person name="Li S."/>
            <person name="Che Y."/>
            <person name="Ortiz-Lopez F.J."/>
            <person name="Bills G.F."/>
            <person name="Liu X."/>
            <person name="An Z."/>
        </authorList>
    </citation>
    <scope>NUCLEOTIDE SEQUENCE [LARGE SCALE GENOMIC DNA]</scope>
    <scope>IDENTIFICATION</scope>
    <scope>FUNCTION</scope>
    <source>
        <strain>ATCC 20868 / MF5171</strain>
    </source>
</reference>
<reference key="2">
    <citation type="journal article" date="2014" name="ChemBioChem">
        <title>Pneumocandin biosynthesis: involvement of a trans-selective proline hydroxylase.</title>
        <authorList>
            <person name="Houwaart S."/>
            <person name="Youssar L."/>
            <person name="Huettel W."/>
        </authorList>
    </citation>
    <scope>FUNCTION</scope>
</reference>
<reference key="3">
    <citation type="journal article" date="2015" name="ACS Chem. Biol.">
        <title>Genetic manipulation of the pneumocandin biosynthetic pathway for generation of analogues and evaluation of their antifungal activity.</title>
        <authorList>
            <person name="Li Y."/>
            <person name="Chen L."/>
            <person name="Yue Q."/>
            <person name="Liu X."/>
            <person name="An Z."/>
            <person name="Bills G.F."/>
        </authorList>
    </citation>
    <scope>FUNCTION</scope>
    <scope>PATHWAY</scope>
    <scope>BIOTECHNOLOGY</scope>
</reference>
<reference key="4">
    <citation type="journal article" date="2015" name="Appl. Environ. Microbiol.">
        <title>Engineering of Glarea lozoyensis for exclusive production of the pneumocandin B0 precursor of the antifungal drug caspofungin acetate.</title>
        <authorList>
            <person name="Chen L."/>
            <person name="Yue Q."/>
            <person name="Li Y."/>
            <person name="Niu X."/>
            <person name="Xiang M."/>
            <person name="Wang W."/>
            <person name="Bills G.F."/>
            <person name="Liu X."/>
            <person name="An Z."/>
        </authorList>
    </citation>
    <scope>FUNCTION</scope>
    <scope>BIOTECHNOLOGY</scope>
</reference>
<reference key="5">
    <citation type="journal article" date="2016" name="ACS Chem. Biol.">
        <title>Engineering of new pneumocandin side-chain analogues from Glarea lozoyensis by mutasynthesis and evaluation of their antifungal activity.</title>
        <authorList>
            <person name="Chen L."/>
            <person name="Li Y."/>
            <person name="Yue Q."/>
            <person name="Loksztejn A."/>
            <person name="Yokoyama K."/>
            <person name="Felix E.A."/>
            <person name="Liu X."/>
            <person name="Zhang N."/>
            <person name="An Z."/>
            <person name="Bills G.F."/>
        </authorList>
    </citation>
    <scope>FUNCTION</scope>
    <scope>BIOTECHNOLOGY</scope>
</reference>
<reference key="6">
    <citation type="journal article" date="2018" name="Appl. Environ. Microbiol.">
        <title>Cryptic production of trans-3-hydroxyproline in echinocandin B biosynthesis.</title>
        <authorList>
            <person name="Mattay J."/>
            <person name="Houwaart S."/>
            <person name="Huettel W."/>
        </authorList>
    </citation>
    <scope>FUNCTION</scope>
</reference>
<reference key="7">
    <citation type="journal article" date="2017" name="Z. Naturforsch. C">
        <title>Structural diversity in echinocandin biosynthesis: the impact of oxidation steps and approaches toward an evolutionary explanation.</title>
        <authorList>
            <person name="Huettel W."/>
        </authorList>
    </citation>
    <scope>REVIEW</scope>
</reference>
<name>GLOH_GLAL2</name>
<organism>
    <name type="scientific">Glarea lozoyensis (strain ATCC 20868 / MF5171)</name>
    <dbReference type="NCBI Taxonomy" id="1116229"/>
    <lineage>
        <taxon>Eukaryota</taxon>
        <taxon>Fungi</taxon>
        <taxon>Dikarya</taxon>
        <taxon>Ascomycota</taxon>
        <taxon>Pezizomycotina</taxon>
        <taxon>Leotiomycetes</taxon>
        <taxon>Helotiales</taxon>
        <taxon>Helotiaceae</taxon>
        <taxon>Glarea</taxon>
    </lineage>
</organism>
<feature type="chain" id="PRO_0000444495" description="Isopropyl malate synthase gloH">
    <location>
        <begin position="1"/>
        <end position="617"/>
    </location>
</feature>
<feature type="domain" description="Pyruvate carboxyltransferase" evidence="2">
    <location>
        <begin position="47"/>
        <end position="325"/>
    </location>
</feature>
<proteinExistence type="evidence at protein level"/>
<comment type="function">
    <text evidence="3 4 5 6 7 11">2-isopropylmalate synthase; part of the gene cluster that mediates the biosynthesis of pneumocandins, lipohexapeptides of the echinocandin family that prevent fungal cell wall formation by non-competitive inhibition of beta-1,3-glucan synthase (PubMed:27705900). The 10,12-dimethylmyristoyl side chain is synthesized by the reducing polyketide synthase gloL/GLPKS4 (PubMed:27494047). The thioesterase gloN/GLHYD exclusively interacts with gloL/GLPKS4 to maintain turnover of the polyketide side chain (PubMed:27494047). The 10R,12S-dimethylmyristic acid is then transferred to the first thiolation domain of the nonribosomal peptide synthetase gloA/GLNRPS4 by the acyl-AMP ligase gloD/GLligase, followed by its acylation to L-ornithine to trigger elongation of the cyclic hexapeptide (PubMed:27494047). L-ornithine, 4R-hydroxyl-L-proline (generated from L-proline by the dioxygenase gloF/GLOXY2), 3S-hydroxyl-L-homotyrosine (generated by gloG/GLHtyB, gloH/GLHtyA, gloI/GLHtyC, gloJ/GLHtyD and hydroxylated at C-3 by the dioxygenase gloM/GLOXY1), 3R-hydroxyl-L-glutamine (generated from L-glutamine probably by the dioxygenase gloE/GLOXY3) and 3S-hydroxyl-L-proline (generated from L-proline by the dioxygenase gloF/GLOXY2 to yield pneumocandin B0), or 3S-hydroxyl-4S-methyl-L-proline (generated from L-leucine by the dioxygenase gloC/GLOXY4 to yield pneumocandin A0) are sequentially added to the growing chain (PubMed:25270390, PubMed:25527531, PubMed:25879325). The last C domain of gloA/GLNRPS4 is proposed to be responsible for cyclization by condensation to form the peptide bond between L-ornithine and 3S-hydroxyl-4S-methyl-L-proline (for pneumocandin A0) or 3S-hydroxyl-L-proline (for pneumocandin B0). Finally, the subsequent C-4 hydroxylation of 3S-hydroxyl-L-homotyrosine and L-ornithine dihydroxylation at C-4 and C-5 are performed by the cytochrome P450 monooxygenases gloP/GLP450-1 and gloO/GLP450-2, respectively (PubMed:25879325).</text>
</comment>
<comment type="catalytic activity">
    <reaction evidence="1">
        <text>3-methyl-2-oxobutanoate + acetyl-CoA + H2O = (2S)-2-isopropylmalate + CoA + H(+)</text>
        <dbReference type="Rhea" id="RHEA:21524"/>
        <dbReference type="ChEBI" id="CHEBI:1178"/>
        <dbReference type="ChEBI" id="CHEBI:11851"/>
        <dbReference type="ChEBI" id="CHEBI:15377"/>
        <dbReference type="ChEBI" id="CHEBI:15378"/>
        <dbReference type="ChEBI" id="CHEBI:57287"/>
        <dbReference type="ChEBI" id="CHEBI:57288"/>
        <dbReference type="EC" id="2.3.3.13"/>
    </reaction>
</comment>
<comment type="pathway">
    <text evidence="13">Mycotoxin biosynthesis.</text>
</comment>
<comment type="biotechnology">
    <text evidence="4 5 6">Pneumocandin B0 is the starting molecule for the first semisynthetic echinocandin antifungal drug, caspofungin acetate (PubMed:25527531). Pneumocandin B0 is a minor fermentation product, and its industrial production was achieved by a combination of extensive mutation and medium optimization (PubMed:25527531). Inactivation of three of gloP/GLP450-1, gloO/GLP450-2, and gloM/GLOXY1 generates 13 different pneumocandin analogs that lack one, two, three, or four hydroxyl groups on 4R,5R-dihydroxy-ornithine and 3S,4S-dihydroxy-homotyrosine of the parent hexapeptide (PubMed:25879325). All of these cyclic lipopeptides show potent antifungal activities, and two new metabolites pneumocandins F and G are more potent in vitro against Candida species and Aspergillus fumigatus than the principal fermentation products, pneumocandins A0 and B0 (PubMed:25879325). Moreover, feeding alternative side chain precursors yields acrophiarin and 4 additional pneumocandin congeners with straight C14, C15, and C16 side chains. One of those compounds, pneumocandin I, has elevated antifungal activity and similar hemolytic activity compared to pneumocandin B0, the starting molecule for caspofungin, demonstrating the potential for using gloD/GLligase for future engineering of new echinocandin analogs (PubMed:27494047).</text>
</comment>
<comment type="similarity">
    <text evidence="12">Belongs to the alpha-IPM synthase/homocitrate synthase family. LeuA type 2 subfamily.</text>
</comment>
<gene>
    <name evidence="9" type="primary">gloH</name>
    <name evidence="10" type="synonym">GLHtyA</name>
    <name type="ORF">GLAREA_10039</name>
</gene>
<dbReference type="EC" id="2.3.3.13" evidence="1"/>
<dbReference type="EMBL" id="KE145356">
    <property type="protein sequence ID" value="EPE34345.1"/>
    <property type="molecule type" value="Genomic_DNA"/>
</dbReference>
<dbReference type="RefSeq" id="XP_008078280.1">
    <property type="nucleotide sequence ID" value="XM_008080089.1"/>
</dbReference>
<dbReference type="SMR" id="S3D9F8"/>
<dbReference type="STRING" id="1116229.S3D9F8"/>
<dbReference type="GeneID" id="19469086"/>
<dbReference type="KEGG" id="glz:GLAREA_10039"/>
<dbReference type="eggNOG" id="KOG2367">
    <property type="taxonomic scope" value="Eukaryota"/>
</dbReference>
<dbReference type="HOGENOM" id="CLU_004588_3_0_1"/>
<dbReference type="OMA" id="FRNTKEQ"/>
<dbReference type="OrthoDB" id="418791at2759"/>
<dbReference type="Proteomes" id="UP000016922">
    <property type="component" value="Unassembled WGS sequence"/>
</dbReference>
<dbReference type="GO" id="GO:0005739">
    <property type="term" value="C:mitochondrion"/>
    <property type="evidence" value="ECO:0007669"/>
    <property type="project" value="TreeGrafter"/>
</dbReference>
<dbReference type="GO" id="GO:0003852">
    <property type="term" value="F:2-isopropylmalate synthase activity"/>
    <property type="evidence" value="ECO:0007669"/>
    <property type="project" value="UniProtKB-EC"/>
</dbReference>
<dbReference type="GO" id="GO:0009098">
    <property type="term" value="P:L-leucine biosynthetic process"/>
    <property type="evidence" value="ECO:0007669"/>
    <property type="project" value="UniProtKB-KW"/>
</dbReference>
<dbReference type="Gene3D" id="3.30.160.270">
    <property type="match status" value="1"/>
</dbReference>
<dbReference type="Gene3D" id="3.20.20.70">
    <property type="entry name" value="Aldolase class I"/>
    <property type="match status" value="1"/>
</dbReference>
<dbReference type="InterPro" id="IPR002034">
    <property type="entry name" value="AIPM/Hcit_synth_CS"/>
</dbReference>
<dbReference type="InterPro" id="IPR013785">
    <property type="entry name" value="Aldolase_TIM"/>
</dbReference>
<dbReference type="InterPro" id="IPR054692">
    <property type="entry name" value="LeuA-like_post-cat"/>
</dbReference>
<dbReference type="InterPro" id="IPR036230">
    <property type="entry name" value="LeuA_allosteric_dom_sf"/>
</dbReference>
<dbReference type="InterPro" id="IPR000891">
    <property type="entry name" value="PYR_CT"/>
</dbReference>
<dbReference type="NCBIfam" id="NF002991">
    <property type="entry name" value="PRK03739.1"/>
    <property type="match status" value="1"/>
</dbReference>
<dbReference type="PANTHER" id="PTHR46911">
    <property type="match status" value="1"/>
</dbReference>
<dbReference type="PANTHER" id="PTHR46911:SF1">
    <property type="entry name" value="2-ISOPROPYLMALATE SYNTHASE"/>
    <property type="match status" value="1"/>
</dbReference>
<dbReference type="Pfam" id="PF00682">
    <property type="entry name" value="HMGL-like"/>
    <property type="match status" value="1"/>
</dbReference>
<dbReference type="Pfam" id="PF22615">
    <property type="entry name" value="IPMS_D2"/>
    <property type="match status" value="1"/>
</dbReference>
<dbReference type="SUPFAM" id="SSF51569">
    <property type="entry name" value="Aldolase"/>
    <property type="match status" value="1"/>
</dbReference>
<dbReference type="SUPFAM" id="SSF89000">
    <property type="entry name" value="post-HMGL domain-like"/>
    <property type="match status" value="1"/>
</dbReference>
<dbReference type="PROSITE" id="PS00815">
    <property type="entry name" value="AIPM_HOMOCIT_SYNTH_1"/>
    <property type="match status" value="1"/>
</dbReference>
<dbReference type="PROSITE" id="PS00816">
    <property type="entry name" value="AIPM_HOMOCIT_SYNTH_2"/>
    <property type="match status" value="1"/>
</dbReference>
<dbReference type="PROSITE" id="PS50991">
    <property type="entry name" value="PYR_CT"/>
    <property type="match status" value="1"/>
</dbReference>